<accession>Q39UH3</accession>
<comment type="function">
    <text evidence="1">ATP-dependent specificity component of the Clp protease. It directs the protease to specific substrates. Can perform chaperone functions in the absence of ClpP.</text>
</comment>
<comment type="subunit">
    <text evidence="1">Component of the ClpX-ClpP complex. Forms a hexameric ring that, in the presence of ATP, binds to fourteen ClpP subunits assembled into a disk-like structure with a central cavity, resembling the structure of eukaryotic proteasomes.</text>
</comment>
<comment type="similarity">
    <text evidence="1">Belongs to the ClpX chaperone family.</text>
</comment>
<gene>
    <name evidence="1" type="primary">clpX</name>
    <name type="ordered locus">Gmet_1872</name>
</gene>
<protein>
    <recommendedName>
        <fullName evidence="1">ATP-dependent Clp protease ATP-binding subunit ClpX</fullName>
    </recommendedName>
</protein>
<keyword id="KW-0067">ATP-binding</keyword>
<keyword id="KW-0143">Chaperone</keyword>
<keyword id="KW-0479">Metal-binding</keyword>
<keyword id="KW-0547">Nucleotide-binding</keyword>
<keyword id="KW-1185">Reference proteome</keyword>
<keyword id="KW-0862">Zinc</keyword>
<reference key="1">
    <citation type="journal article" date="2009" name="BMC Microbiol.">
        <title>The genome sequence of Geobacter metallireducens: features of metabolism, physiology and regulation common and dissimilar to Geobacter sulfurreducens.</title>
        <authorList>
            <person name="Aklujkar M."/>
            <person name="Krushkal J."/>
            <person name="DiBartolo G."/>
            <person name="Lapidus A."/>
            <person name="Land M.L."/>
            <person name="Lovley D.R."/>
        </authorList>
    </citation>
    <scope>NUCLEOTIDE SEQUENCE [LARGE SCALE GENOMIC DNA]</scope>
    <source>
        <strain>ATCC 53774 / DSM 7210 / GS-15</strain>
    </source>
</reference>
<organism>
    <name type="scientific">Geobacter metallireducens (strain ATCC 53774 / DSM 7210 / GS-15)</name>
    <dbReference type="NCBI Taxonomy" id="269799"/>
    <lineage>
        <taxon>Bacteria</taxon>
        <taxon>Pseudomonadati</taxon>
        <taxon>Thermodesulfobacteriota</taxon>
        <taxon>Desulfuromonadia</taxon>
        <taxon>Geobacterales</taxon>
        <taxon>Geobacteraceae</taxon>
        <taxon>Geobacter</taxon>
    </lineage>
</organism>
<feature type="chain" id="PRO_1000024561" description="ATP-dependent Clp protease ATP-binding subunit ClpX">
    <location>
        <begin position="1"/>
        <end position="417"/>
    </location>
</feature>
<feature type="domain" description="ClpX-type ZB" evidence="2">
    <location>
        <begin position="1"/>
        <end position="54"/>
    </location>
</feature>
<feature type="binding site" evidence="2">
    <location>
        <position position="13"/>
    </location>
    <ligand>
        <name>Zn(2+)</name>
        <dbReference type="ChEBI" id="CHEBI:29105"/>
    </ligand>
</feature>
<feature type="binding site" evidence="2">
    <location>
        <position position="16"/>
    </location>
    <ligand>
        <name>Zn(2+)</name>
        <dbReference type="ChEBI" id="CHEBI:29105"/>
    </ligand>
</feature>
<feature type="binding site" evidence="2">
    <location>
        <position position="35"/>
    </location>
    <ligand>
        <name>Zn(2+)</name>
        <dbReference type="ChEBI" id="CHEBI:29105"/>
    </ligand>
</feature>
<feature type="binding site" evidence="2">
    <location>
        <position position="38"/>
    </location>
    <ligand>
        <name>Zn(2+)</name>
        <dbReference type="ChEBI" id="CHEBI:29105"/>
    </ligand>
</feature>
<feature type="binding site" evidence="1">
    <location>
        <begin position="119"/>
        <end position="126"/>
    </location>
    <ligand>
        <name>ATP</name>
        <dbReference type="ChEBI" id="CHEBI:30616"/>
    </ligand>
</feature>
<dbReference type="EMBL" id="CP000148">
    <property type="protein sequence ID" value="ABB32101.1"/>
    <property type="molecule type" value="Genomic_DNA"/>
</dbReference>
<dbReference type="RefSeq" id="WP_004511973.1">
    <property type="nucleotide sequence ID" value="NC_007517.1"/>
</dbReference>
<dbReference type="SMR" id="Q39UH3"/>
<dbReference type="STRING" id="269799.Gmet_1872"/>
<dbReference type="KEGG" id="gme:Gmet_1872"/>
<dbReference type="eggNOG" id="COG1219">
    <property type="taxonomic scope" value="Bacteria"/>
</dbReference>
<dbReference type="HOGENOM" id="CLU_014218_8_2_7"/>
<dbReference type="Proteomes" id="UP000007073">
    <property type="component" value="Chromosome"/>
</dbReference>
<dbReference type="GO" id="GO:0009376">
    <property type="term" value="C:HslUV protease complex"/>
    <property type="evidence" value="ECO:0007669"/>
    <property type="project" value="TreeGrafter"/>
</dbReference>
<dbReference type="GO" id="GO:0005524">
    <property type="term" value="F:ATP binding"/>
    <property type="evidence" value="ECO:0007669"/>
    <property type="project" value="UniProtKB-UniRule"/>
</dbReference>
<dbReference type="GO" id="GO:0016887">
    <property type="term" value="F:ATP hydrolysis activity"/>
    <property type="evidence" value="ECO:0007669"/>
    <property type="project" value="InterPro"/>
</dbReference>
<dbReference type="GO" id="GO:0140662">
    <property type="term" value="F:ATP-dependent protein folding chaperone"/>
    <property type="evidence" value="ECO:0007669"/>
    <property type="project" value="InterPro"/>
</dbReference>
<dbReference type="GO" id="GO:0046983">
    <property type="term" value="F:protein dimerization activity"/>
    <property type="evidence" value="ECO:0007669"/>
    <property type="project" value="InterPro"/>
</dbReference>
<dbReference type="GO" id="GO:0051082">
    <property type="term" value="F:unfolded protein binding"/>
    <property type="evidence" value="ECO:0007669"/>
    <property type="project" value="UniProtKB-UniRule"/>
</dbReference>
<dbReference type="GO" id="GO:0008270">
    <property type="term" value="F:zinc ion binding"/>
    <property type="evidence" value="ECO:0007669"/>
    <property type="project" value="InterPro"/>
</dbReference>
<dbReference type="GO" id="GO:0051301">
    <property type="term" value="P:cell division"/>
    <property type="evidence" value="ECO:0007669"/>
    <property type="project" value="TreeGrafter"/>
</dbReference>
<dbReference type="GO" id="GO:0051603">
    <property type="term" value="P:proteolysis involved in protein catabolic process"/>
    <property type="evidence" value="ECO:0007669"/>
    <property type="project" value="TreeGrafter"/>
</dbReference>
<dbReference type="CDD" id="cd19497">
    <property type="entry name" value="RecA-like_ClpX"/>
    <property type="match status" value="1"/>
</dbReference>
<dbReference type="FunFam" id="1.10.8.60:FF:000002">
    <property type="entry name" value="ATP-dependent Clp protease ATP-binding subunit ClpX"/>
    <property type="match status" value="1"/>
</dbReference>
<dbReference type="FunFam" id="3.40.50.300:FF:000005">
    <property type="entry name" value="ATP-dependent Clp protease ATP-binding subunit ClpX"/>
    <property type="match status" value="1"/>
</dbReference>
<dbReference type="Gene3D" id="1.10.8.60">
    <property type="match status" value="1"/>
</dbReference>
<dbReference type="Gene3D" id="6.20.220.10">
    <property type="entry name" value="ClpX chaperone, C4-type zinc finger domain"/>
    <property type="match status" value="1"/>
</dbReference>
<dbReference type="Gene3D" id="3.40.50.300">
    <property type="entry name" value="P-loop containing nucleotide triphosphate hydrolases"/>
    <property type="match status" value="1"/>
</dbReference>
<dbReference type="HAMAP" id="MF_00175">
    <property type="entry name" value="ClpX"/>
    <property type="match status" value="1"/>
</dbReference>
<dbReference type="InterPro" id="IPR003593">
    <property type="entry name" value="AAA+_ATPase"/>
</dbReference>
<dbReference type="InterPro" id="IPR050052">
    <property type="entry name" value="ATP-dep_Clp_protease_ClpX"/>
</dbReference>
<dbReference type="InterPro" id="IPR003959">
    <property type="entry name" value="ATPase_AAA_core"/>
</dbReference>
<dbReference type="InterPro" id="IPR019489">
    <property type="entry name" value="Clp_ATPase_C"/>
</dbReference>
<dbReference type="InterPro" id="IPR004487">
    <property type="entry name" value="Clp_protease_ATP-bd_su_ClpX"/>
</dbReference>
<dbReference type="InterPro" id="IPR046425">
    <property type="entry name" value="ClpX_bact"/>
</dbReference>
<dbReference type="InterPro" id="IPR027417">
    <property type="entry name" value="P-loop_NTPase"/>
</dbReference>
<dbReference type="InterPro" id="IPR010603">
    <property type="entry name" value="Znf_CppX_C4"/>
</dbReference>
<dbReference type="InterPro" id="IPR038366">
    <property type="entry name" value="Znf_CppX_C4_sf"/>
</dbReference>
<dbReference type="NCBIfam" id="TIGR00382">
    <property type="entry name" value="clpX"/>
    <property type="match status" value="1"/>
</dbReference>
<dbReference type="NCBIfam" id="NF003745">
    <property type="entry name" value="PRK05342.1"/>
    <property type="match status" value="1"/>
</dbReference>
<dbReference type="PANTHER" id="PTHR48102:SF7">
    <property type="entry name" value="ATP-DEPENDENT CLP PROTEASE ATP-BINDING SUBUNIT CLPX-LIKE, MITOCHONDRIAL"/>
    <property type="match status" value="1"/>
</dbReference>
<dbReference type="PANTHER" id="PTHR48102">
    <property type="entry name" value="ATP-DEPENDENT CLP PROTEASE ATP-BINDING SUBUNIT CLPX-LIKE, MITOCHONDRIAL-RELATED"/>
    <property type="match status" value="1"/>
</dbReference>
<dbReference type="Pfam" id="PF07724">
    <property type="entry name" value="AAA_2"/>
    <property type="match status" value="1"/>
</dbReference>
<dbReference type="Pfam" id="PF10431">
    <property type="entry name" value="ClpB_D2-small"/>
    <property type="match status" value="1"/>
</dbReference>
<dbReference type="Pfam" id="PF06689">
    <property type="entry name" value="zf-C4_ClpX"/>
    <property type="match status" value="1"/>
</dbReference>
<dbReference type="SMART" id="SM00382">
    <property type="entry name" value="AAA"/>
    <property type="match status" value="1"/>
</dbReference>
<dbReference type="SMART" id="SM01086">
    <property type="entry name" value="ClpB_D2-small"/>
    <property type="match status" value="1"/>
</dbReference>
<dbReference type="SMART" id="SM00994">
    <property type="entry name" value="zf-C4_ClpX"/>
    <property type="match status" value="1"/>
</dbReference>
<dbReference type="SUPFAM" id="SSF57716">
    <property type="entry name" value="Glucocorticoid receptor-like (DNA-binding domain)"/>
    <property type="match status" value="1"/>
</dbReference>
<dbReference type="SUPFAM" id="SSF52540">
    <property type="entry name" value="P-loop containing nucleoside triphosphate hydrolases"/>
    <property type="match status" value="1"/>
</dbReference>
<dbReference type="PROSITE" id="PS51902">
    <property type="entry name" value="CLPX_ZB"/>
    <property type="match status" value="1"/>
</dbReference>
<proteinExistence type="inferred from homology"/>
<name>CLPX_GEOMG</name>
<sequence length="417" mass="46055">MSRRNDSSENLTCSFCGKSQDEVKKLIAGPTVYICDECIELCNDIIAEESKLEEAMGPDVKKLPKPREIKDVLDEYVIGQDRAKKILAVAVYNHYKRIESMGKPSDVEMQKSNILLLGPTGSGKTLLAQTLARILRVPFAMADATNLTEAGYVGEDVENIILNLLQAADYDVERAQKGIIYIDEIDKIARKSDSPSITRDVSGEGVQQALLKIIEGTVASVPPKGGRKHPQQEFLKVDTSNILFICGGAFAGLDNIIQQRIGVKTLGFGADVKSKVEKKAGELLTDVTPEDLLKFGFIPEFIGRLPVLATLHELDEAAMVQILKEPKSALVKQYQKLFEMEHVKLKFTDGSLVAIAREALKRKTGARGLRSILENAMLDIMYEIPSQTMVKEVVISEDVIYNREKPIIVYESVAESA</sequence>
<evidence type="ECO:0000255" key="1">
    <source>
        <dbReference type="HAMAP-Rule" id="MF_00175"/>
    </source>
</evidence>
<evidence type="ECO:0000255" key="2">
    <source>
        <dbReference type="PROSITE-ProRule" id="PRU01250"/>
    </source>
</evidence>